<organism>
    <name type="scientific">Trichodesmium erythraeum (strain IMS101)</name>
    <dbReference type="NCBI Taxonomy" id="203124"/>
    <lineage>
        <taxon>Bacteria</taxon>
        <taxon>Bacillati</taxon>
        <taxon>Cyanobacteriota</taxon>
        <taxon>Cyanophyceae</taxon>
        <taxon>Oscillatoriophycideae</taxon>
        <taxon>Oscillatoriales</taxon>
        <taxon>Microcoleaceae</taxon>
        <taxon>Trichodesmium</taxon>
    </lineage>
</organism>
<keyword id="KW-0963">Cytoplasm</keyword>
<keyword id="KW-0251">Elongation factor</keyword>
<keyword id="KW-0342">GTP-binding</keyword>
<keyword id="KW-0547">Nucleotide-binding</keyword>
<keyword id="KW-0648">Protein biosynthesis</keyword>
<dbReference type="EMBL" id="CP000393">
    <property type="protein sequence ID" value="ABG53494.1"/>
    <property type="molecule type" value="Genomic_DNA"/>
</dbReference>
<dbReference type="RefSeq" id="WP_011613816.1">
    <property type="nucleotide sequence ID" value="NC_008312.1"/>
</dbReference>
<dbReference type="SMR" id="Q10W80"/>
<dbReference type="STRING" id="203124.Tery_4509"/>
<dbReference type="KEGG" id="ter:Tery_4509"/>
<dbReference type="eggNOG" id="COG0480">
    <property type="taxonomic scope" value="Bacteria"/>
</dbReference>
<dbReference type="HOGENOM" id="CLU_002794_4_1_3"/>
<dbReference type="OrthoDB" id="9804431at2"/>
<dbReference type="GO" id="GO:0005737">
    <property type="term" value="C:cytoplasm"/>
    <property type="evidence" value="ECO:0007669"/>
    <property type="project" value="UniProtKB-SubCell"/>
</dbReference>
<dbReference type="GO" id="GO:0005525">
    <property type="term" value="F:GTP binding"/>
    <property type="evidence" value="ECO:0007669"/>
    <property type="project" value="UniProtKB-UniRule"/>
</dbReference>
<dbReference type="GO" id="GO:0003924">
    <property type="term" value="F:GTPase activity"/>
    <property type="evidence" value="ECO:0007669"/>
    <property type="project" value="InterPro"/>
</dbReference>
<dbReference type="GO" id="GO:0003746">
    <property type="term" value="F:translation elongation factor activity"/>
    <property type="evidence" value="ECO:0007669"/>
    <property type="project" value="UniProtKB-UniRule"/>
</dbReference>
<dbReference type="GO" id="GO:0032790">
    <property type="term" value="P:ribosome disassembly"/>
    <property type="evidence" value="ECO:0007669"/>
    <property type="project" value="TreeGrafter"/>
</dbReference>
<dbReference type="CDD" id="cd01886">
    <property type="entry name" value="EF-G"/>
    <property type="match status" value="1"/>
</dbReference>
<dbReference type="CDD" id="cd16262">
    <property type="entry name" value="EFG_III"/>
    <property type="match status" value="1"/>
</dbReference>
<dbReference type="CDD" id="cd01434">
    <property type="entry name" value="EFG_mtEFG1_IV"/>
    <property type="match status" value="1"/>
</dbReference>
<dbReference type="CDD" id="cd03713">
    <property type="entry name" value="EFG_mtEFG_C"/>
    <property type="match status" value="1"/>
</dbReference>
<dbReference type="CDD" id="cd04088">
    <property type="entry name" value="EFG_mtEFG_II"/>
    <property type="match status" value="1"/>
</dbReference>
<dbReference type="FunFam" id="2.40.30.10:FF:000006">
    <property type="entry name" value="Elongation factor G"/>
    <property type="match status" value="1"/>
</dbReference>
<dbReference type="FunFam" id="3.30.230.10:FF:000003">
    <property type="entry name" value="Elongation factor G"/>
    <property type="match status" value="1"/>
</dbReference>
<dbReference type="FunFam" id="3.30.70.240:FF:000001">
    <property type="entry name" value="Elongation factor G"/>
    <property type="match status" value="1"/>
</dbReference>
<dbReference type="FunFam" id="3.30.70.870:FF:000001">
    <property type="entry name" value="Elongation factor G"/>
    <property type="match status" value="1"/>
</dbReference>
<dbReference type="FunFam" id="3.40.50.300:FF:000029">
    <property type="entry name" value="Elongation factor G"/>
    <property type="match status" value="1"/>
</dbReference>
<dbReference type="Gene3D" id="3.30.230.10">
    <property type="match status" value="1"/>
</dbReference>
<dbReference type="Gene3D" id="3.30.70.240">
    <property type="match status" value="1"/>
</dbReference>
<dbReference type="Gene3D" id="3.30.70.870">
    <property type="entry name" value="Elongation Factor G (Translational Gtpase), domain 3"/>
    <property type="match status" value="1"/>
</dbReference>
<dbReference type="Gene3D" id="3.40.50.300">
    <property type="entry name" value="P-loop containing nucleotide triphosphate hydrolases"/>
    <property type="match status" value="1"/>
</dbReference>
<dbReference type="Gene3D" id="2.40.30.10">
    <property type="entry name" value="Translation factors"/>
    <property type="match status" value="1"/>
</dbReference>
<dbReference type="HAMAP" id="MF_00054_B">
    <property type="entry name" value="EF_G_EF_2_B"/>
    <property type="match status" value="1"/>
</dbReference>
<dbReference type="InterPro" id="IPR041095">
    <property type="entry name" value="EFG_II"/>
</dbReference>
<dbReference type="InterPro" id="IPR009022">
    <property type="entry name" value="EFG_III"/>
</dbReference>
<dbReference type="InterPro" id="IPR035647">
    <property type="entry name" value="EFG_III/V"/>
</dbReference>
<dbReference type="InterPro" id="IPR047872">
    <property type="entry name" value="EFG_IV"/>
</dbReference>
<dbReference type="InterPro" id="IPR035649">
    <property type="entry name" value="EFG_V"/>
</dbReference>
<dbReference type="InterPro" id="IPR000640">
    <property type="entry name" value="EFG_V-like"/>
</dbReference>
<dbReference type="InterPro" id="IPR004161">
    <property type="entry name" value="EFTu-like_2"/>
</dbReference>
<dbReference type="InterPro" id="IPR031157">
    <property type="entry name" value="G_TR_CS"/>
</dbReference>
<dbReference type="InterPro" id="IPR027417">
    <property type="entry name" value="P-loop_NTPase"/>
</dbReference>
<dbReference type="InterPro" id="IPR020568">
    <property type="entry name" value="Ribosomal_Su5_D2-typ_SF"/>
</dbReference>
<dbReference type="InterPro" id="IPR014721">
    <property type="entry name" value="Ribsml_uS5_D2-typ_fold_subgr"/>
</dbReference>
<dbReference type="InterPro" id="IPR005225">
    <property type="entry name" value="Small_GTP-bd"/>
</dbReference>
<dbReference type="InterPro" id="IPR000795">
    <property type="entry name" value="T_Tr_GTP-bd_dom"/>
</dbReference>
<dbReference type="InterPro" id="IPR009000">
    <property type="entry name" value="Transl_B-barrel_sf"/>
</dbReference>
<dbReference type="InterPro" id="IPR004540">
    <property type="entry name" value="Transl_elong_EFG/EF2"/>
</dbReference>
<dbReference type="InterPro" id="IPR005517">
    <property type="entry name" value="Transl_elong_EFG/EF2_IV"/>
</dbReference>
<dbReference type="NCBIfam" id="TIGR00484">
    <property type="entry name" value="EF-G"/>
    <property type="match status" value="1"/>
</dbReference>
<dbReference type="NCBIfam" id="NF009381">
    <property type="entry name" value="PRK12740.1-5"/>
    <property type="match status" value="1"/>
</dbReference>
<dbReference type="NCBIfam" id="TIGR00231">
    <property type="entry name" value="small_GTP"/>
    <property type="match status" value="1"/>
</dbReference>
<dbReference type="PANTHER" id="PTHR43261:SF5">
    <property type="entry name" value="ELONGATION FACTOR G 1"/>
    <property type="match status" value="1"/>
</dbReference>
<dbReference type="PANTHER" id="PTHR43261">
    <property type="entry name" value="TRANSLATION ELONGATION FACTOR G-RELATED"/>
    <property type="match status" value="1"/>
</dbReference>
<dbReference type="Pfam" id="PF00679">
    <property type="entry name" value="EFG_C"/>
    <property type="match status" value="1"/>
</dbReference>
<dbReference type="Pfam" id="PF14492">
    <property type="entry name" value="EFG_III"/>
    <property type="match status" value="1"/>
</dbReference>
<dbReference type="Pfam" id="PF03764">
    <property type="entry name" value="EFG_IV"/>
    <property type="match status" value="1"/>
</dbReference>
<dbReference type="Pfam" id="PF00009">
    <property type="entry name" value="GTP_EFTU"/>
    <property type="match status" value="1"/>
</dbReference>
<dbReference type="Pfam" id="PF03144">
    <property type="entry name" value="GTP_EFTU_D2"/>
    <property type="match status" value="1"/>
</dbReference>
<dbReference type="PRINTS" id="PR00315">
    <property type="entry name" value="ELONGATNFCT"/>
</dbReference>
<dbReference type="SMART" id="SM00838">
    <property type="entry name" value="EFG_C"/>
    <property type="match status" value="1"/>
</dbReference>
<dbReference type="SMART" id="SM00889">
    <property type="entry name" value="EFG_IV"/>
    <property type="match status" value="1"/>
</dbReference>
<dbReference type="SUPFAM" id="SSF54980">
    <property type="entry name" value="EF-G C-terminal domain-like"/>
    <property type="match status" value="2"/>
</dbReference>
<dbReference type="SUPFAM" id="SSF52540">
    <property type="entry name" value="P-loop containing nucleoside triphosphate hydrolases"/>
    <property type="match status" value="1"/>
</dbReference>
<dbReference type="SUPFAM" id="SSF54211">
    <property type="entry name" value="Ribosomal protein S5 domain 2-like"/>
    <property type="match status" value="1"/>
</dbReference>
<dbReference type="SUPFAM" id="SSF50447">
    <property type="entry name" value="Translation proteins"/>
    <property type="match status" value="1"/>
</dbReference>
<dbReference type="PROSITE" id="PS00301">
    <property type="entry name" value="G_TR_1"/>
    <property type="match status" value="1"/>
</dbReference>
<dbReference type="PROSITE" id="PS51722">
    <property type="entry name" value="G_TR_2"/>
    <property type="match status" value="1"/>
</dbReference>
<gene>
    <name evidence="1" type="primary">fusA2</name>
    <name type="ordered locus">Tery_4509</name>
</gene>
<feature type="chain" id="PRO_0000263533" description="Elongation factor G 2">
    <location>
        <begin position="1"/>
        <end position="697"/>
    </location>
</feature>
<feature type="domain" description="tr-type G">
    <location>
        <begin position="6"/>
        <end position="281"/>
    </location>
</feature>
<feature type="binding site" evidence="1">
    <location>
        <begin position="15"/>
        <end position="22"/>
    </location>
    <ligand>
        <name>GTP</name>
        <dbReference type="ChEBI" id="CHEBI:37565"/>
    </ligand>
</feature>
<feature type="binding site" evidence="1">
    <location>
        <begin position="79"/>
        <end position="83"/>
    </location>
    <ligand>
        <name>GTP</name>
        <dbReference type="ChEBI" id="CHEBI:37565"/>
    </ligand>
</feature>
<feature type="binding site" evidence="1">
    <location>
        <begin position="133"/>
        <end position="136"/>
    </location>
    <ligand>
        <name>GTP</name>
        <dbReference type="ChEBI" id="CHEBI:37565"/>
    </ligand>
</feature>
<comment type="function">
    <text evidence="1">Catalyzes the GTP-dependent ribosomal translocation step during translation elongation. During this step, the ribosome changes from the pre-translocational (PRE) to the post-translocational (POST) state as the newly formed A-site-bound peptidyl-tRNA and P-site-bound deacylated tRNA move to the P and E sites, respectively. Catalyzes the coordinated movement of the two tRNA molecules, the mRNA and conformational changes in the ribosome.</text>
</comment>
<comment type="subcellular location">
    <subcellularLocation>
        <location evidence="1">Cytoplasm</location>
    </subcellularLocation>
</comment>
<comment type="similarity">
    <text evidence="1">Belongs to the TRAFAC class translation factor GTPase superfamily. Classic translation factor GTPase family. EF-G/EF-2 subfamily.</text>
</comment>
<evidence type="ECO:0000255" key="1">
    <source>
        <dbReference type="HAMAP-Rule" id="MF_00054"/>
    </source>
</evidence>
<protein>
    <recommendedName>
        <fullName evidence="1">Elongation factor G 2</fullName>
        <shortName evidence="1">EF-G 2</shortName>
    </recommendedName>
</protein>
<name>EFG2_TRIEI</name>
<sequence>MAKDLTNYRNFGIFAHVDAGKTTTTERILKLTGKIHKIGEVHEGAATTDFMEQEQERGITIQSAATSCFWKDHQLNIIDTPGHVDFTIEVYRSLKVLDGGVGVFCGSGGVEPQSETNWRYANDSKVARIIYVNKLDRTGADFYKVVKQVKDVLAAEPLVMVLPIGIENDFVGVVDLLTRKAWVWDDSGDPTKYEIKDVPENMTDDVEKYREMLVETAIEQDDEVMEKYLEGEEPDLDTLKRCIRKGTKDLVFFPTYCGSSFKNKGVQLVLDAVVDFLPNPTEIKPQPEIDLEGNETGKFAYVDPEKPLRALAFKIMDDKYGALTFTRIYSGTLSKGDTVLNTFTGKTERIGRLVEMHADSREEIESAQAGDIVAIVGMKNVQTGHTLCDPKEPATLEPMVFPDPVISIAVAAKDKGSVEKLGMALSKMVQEDPSFRVETDAESNETIIKGMGELHLDIKVDILKRTYGVDVEVGKPQVAYRESITKRLEDSYTHKKQSGGSGQFAKIDYMIEPGEVGTGFDFQSKVTGGNVPREFWPAVQKGFETSFEKGMLAGYPCVDMKFTLMDGAFHPVDSSAIAFEIAAKAAYRQSFSKAAPQLLEPIMKVDVFTPDDHVGDVIGDLNRRRGMIKSQDSAATGSRIKADVPLSEMFGYIGDLRTMTSGRGQFSMEFSHYAPCPANVAEVVIKEAKERQEAKSK</sequence>
<reference key="1">
    <citation type="journal article" date="2015" name="Proc. Natl. Acad. Sci. U.S.A.">
        <title>Trichodesmium genome maintains abundant, widespread noncoding DNA in situ, despite oligotrophic lifestyle.</title>
        <authorList>
            <person name="Walworth N."/>
            <person name="Pfreundt U."/>
            <person name="Nelson W.C."/>
            <person name="Mincer T."/>
            <person name="Heidelberg J.F."/>
            <person name="Fu F."/>
            <person name="Waterbury J.B."/>
            <person name="Glavina del Rio T."/>
            <person name="Goodwin L."/>
            <person name="Kyrpides N.C."/>
            <person name="Land M.L."/>
            <person name="Woyke T."/>
            <person name="Hutchins D.A."/>
            <person name="Hess W.R."/>
            <person name="Webb E.A."/>
        </authorList>
    </citation>
    <scope>NUCLEOTIDE SEQUENCE [LARGE SCALE GENOMIC DNA]</scope>
    <source>
        <strain>IMS101</strain>
    </source>
</reference>
<proteinExistence type="inferred from homology"/>
<accession>Q10W80</accession>